<accession>Q2PBL9</accession>
<dbReference type="EMBL" id="AJ967010">
    <property type="protein sequence ID" value="CAI91191.1"/>
    <property type="molecule type" value="Genomic_DNA"/>
</dbReference>
<dbReference type="STRING" id="29488.KS18_20640"/>
<dbReference type="GO" id="GO:0005886">
    <property type="term" value="C:plasma membrane"/>
    <property type="evidence" value="ECO:0007669"/>
    <property type="project" value="UniProtKB-SubCell"/>
</dbReference>
<dbReference type="GO" id="GO:0022857">
    <property type="term" value="F:transmembrane transporter activity"/>
    <property type="evidence" value="ECO:0007669"/>
    <property type="project" value="InterPro"/>
</dbReference>
<dbReference type="CDD" id="cd06579">
    <property type="entry name" value="TM_PBP1_transp_AraH_like"/>
    <property type="match status" value="1"/>
</dbReference>
<dbReference type="InterPro" id="IPR001851">
    <property type="entry name" value="ABC_transp_permease"/>
</dbReference>
<dbReference type="NCBIfam" id="NF011961">
    <property type="entry name" value="PRK15432.1"/>
    <property type="match status" value="1"/>
</dbReference>
<dbReference type="PANTHER" id="PTHR32196">
    <property type="entry name" value="ABC TRANSPORTER PERMEASE PROTEIN YPHD-RELATED-RELATED"/>
    <property type="match status" value="1"/>
</dbReference>
<dbReference type="PANTHER" id="PTHR32196:SF29">
    <property type="entry name" value="AUTOINDUCER 2 IMPORT SYSTEM PERMEASE PROTEIN LSRC"/>
    <property type="match status" value="1"/>
</dbReference>
<dbReference type="Pfam" id="PF02653">
    <property type="entry name" value="BPD_transp_2"/>
    <property type="match status" value="1"/>
</dbReference>
<comment type="function">
    <text evidence="1">Part of the ABC transporter complex LsrABCD involved in autoinducer 2 (AI-2) import. Probably responsible for the translocation of the substrate across the membrane (By similarity).</text>
</comment>
<comment type="subunit">
    <text evidence="1">The complex is composed of two ATP-binding proteins (LsrA), two transmembrane proteins (LsrC and LsrD) and a solute-binding protein (LsrB).</text>
</comment>
<comment type="subcellular location">
    <subcellularLocation>
        <location evidence="1">Cell inner membrane</location>
        <topology evidence="1">Multi-pass membrane protein</topology>
    </subcellularLocation>
</comment>
<comment type="similarity">
    <text evidence="3">Belongs to the binding-protein-dependent transport system permease family. AraH/RbsC subfamily.</text>
</comment>
<sequence length="331" mass="35363">MLKLIQNNREITALIAILCLFGLLSVIDHQYFSLQTVTLVFSSAQILILLAIGATLVMLTRNIDVSVGSIAGLCAVIMGMSLNAGFNLPVSCLLTLLLGMCAGFINGALVTWLKIPAIVTTLGTLGLYRGLMLLLTDGKWIEXLPDELKRLSAPLWLNISPIGWLLMILILAMAWILAKTTFGRNFYATGDNLQGARQLGVRTDSIQIIAFSVNGIMAALAGIVFASQIGFIPNQTGSGLEMRAIAACVLGGISLLGGTGTVIGAILGAFFLTQINSGLVLLKLPAWWNDFIAGFVLLAVLIFDGRLRCAIEKISANKNMPVSSKMTKVIR</sequence>
<organism>
    <name type="scientific">Photorhabdus luminescens</name>
    <name type="common">Xenorhabdus luminescens</name>
    <dbReference type="NCBI Taxonomy" id="29488"/>
    <lineage>
        <taxon>Bacteria</taxon>
        <taxon>Pseudomonadati</taxon>
        <taxon>Pseudomonadota</taxon>
        <taxon>Gammaproteobacteria</taxon>
        <taxon>Enterobacterales</taxon>
        <taxon>Morganellaceae</taxon>
        <taxon>Photorhabdus</taxon>
    </lineage>
</organism>
<reference key="1">
    <citation type="journal article" date="2006" name="J. Bacteriol.">
        <title>Whole-genome comparison between Photorhabdus strains to identify genomic regions involved in the specificity of nematode interaction.</title>
        <authorList>
            <person name="Gaudriault S."/>
            <person name="Duchaud E."/>
            <person name="Lanois A."/>
            <person name="Canoy A.-S."/>
            <person name="Bourot S."/>
            <person name="DeRose R."/>
            <person name="Kunst F."/>
            <person name="Boemare N."/>
            <person name="Givaudan A."/>
        </authorList>
    </citation>
    <scope>NUCLEOTIDE SEQUENCE [GENOMIC DNA]</scope>
    <source>
        <strain>ATCC 29999 / DSM 3368 / BCRC 14801 / CCM 7077 / CIP 106429 / NCIMB 12670 / Hb</strain>
    </source>
</reference>
<gene>
    <name type="primary">lsrC</name>
</gene>
<feature type="chain" id="PRO_0000351343" description="Autoinducer 2 import system permease protein LsrC">
    <location>
        <begin position="1"/>
        <end position="331"/>
    </location>
</feature>
<feature type="transmembrane region" description="Helical" evidence="2">
    <location>
        <begin position="14"/>
        <end position="34"/>
    </location>
</feature>
<feature type="transmembrane region" description="Helical" evidence="2">
    <location>
        <begin position="39"/>
        <end position="59"/>
    </location>
</feature>
<feature type="transmembrane region" description="Helical" evidence="2">
    <location>
        <begin position="70"/>
        <end position="90"/>
    </location>
</feature>
<feature type="transmembrane region" description="Helical" evidence="2">
    <location>
        <begin position="93"/>
        <end position="113"/>
    </location>
</feature>
<feature type="transmembrane region" description="Helical" evidence="2">
    <location>
        <begin position="115"/>
        <end position="135"/>
    </location>
</feature>
<feature type="transmembrane region" description="Helical" evidence="2">
    <location>
        <begin position="157"/>
        <end position="177"/>
    </location>
</feature>
<feature type="transmembrane region" description="Helical" evidence="2">
    <location>
        <begin position="206"/>
        <end position="226"/>
    </location>
</feature>
<feature type="transmembrane region" description="Helical" evidence="2">
    <location>
        <begin position="252"/>
        <end position="272"/>
    </location>
</feature>
<feature type="transmembrane region" description="Helical" evidence="2">
    <location>
        <begin position="284"/>
        <end position="304"/>
    </location>
</feature>
<proteinExistence type="inferred from homology"/>
<protein>
    <recommendedName>
        <fullName>Autoinducer 2 import system permease protein LsrC</fullName>
        <shortName>AI-2 import system permease protein LsrC</shortName>
    </recommendedName>
</protein>
<keyword id="KW-0997">Cell inner membrane</keyword>
<keyword id="KW-1003">Cell membrane</keyword>
<keyword id="KW-0472">Membrane</keyword>
<keyword id="KW-0812">Transmembrane</keyword>
<keyword id="KW-1133">Transmembrane helix</keyword>
<keyword id="KW-0813">Transport</keyword>
<name>LSRC_PHOLU</name>
<evidence type="ECO:0000250" key="1"/>
<evidence type="ECO:0000255" key="2"/>
<evidence type="ECO:0000305" key="3"/>